<protein>
    <recommendedName>
        <fullName>Hemagglutinin-neuraminidase</fullName>
        <ecNumber evidence="3">3.2.1.18</ecNumber>
    </recommendedName>
</protein>
<organism>
    <name type="scientific">Newcastle disease virus (strain Chicken/United States/LaSota/46)</name>
    <name type="common">NDV</name>
    <dbReference type="NCBI Taxonomy" id="11184"/>
    <lineage>
        <taxon>Viruses</taxon>
        <taxon>Riboviria</taxon>
        <taxon>Orthornavirae</taxon>
        <taxon>Negarnaviricota</taxon>
        <taxon>Haploviricotina</taxon>
        <taxon>Monjiviricetes</taxon>
        <taxon>Mononegavirales</taxon>
        <taxon>Paramyxoviridae</taxon>
        <taxon>Avulavirinae</taxon>
        <taxon>Orthoavulavirus</taxon>
        <taxon>Orthoavulavirus javaense</taxon>
        <taxon>Avian paramyxovirus 1</taxon>
    </lineage>
</organism>
<gene>
    <name type="primary">HN</name>
</gene>
<keyword id="KW-1015">Disulfide bond</keyword>
<keyword id="KW-0325">Glycoprotein</keyword>
<keyword id="KW-0348">Hemagglutinin</keyword>
<keyword id="KW-1032">Host cell membrane</keyword>
<keyword id="KW-1043">Host membrane</keyword>
<keyword id="KW-0945">Host-virus interaction</keyword>
<keyword id="KW-0378">Hydrolase</keyword>
<keyword id="KW-0472">Membrane</keyword>
<keyword id="KW-0735">Signal-anchor</keyword>
<keyword id="KW-0812">Transmembrane</keyword>
<keyword id="KW-1133">Transmembrane helix</keyword>
<keyword id="KW-1161">Viral attachment to host cell</keyword>
<keyword id="KW-0261">Viral envelope protein</keyword>
<keyword id="KW-0946">Virion</keyword>
<keyword id="KW-1160">Virus entry into host cell</keyword>
<reference key="1">
    <citation type="journal article" date="1989" name="Virology">
        <title>Newcastle disease virus evolution. I. Multiple lineages defined by sequence variability of the hemagglutinin-neuraminidase gene.</title>
        <authorList>
            <person name="Sakaguchi T."/>
            <person name="Toyoda T."/>
            <person name="Gotoh B."/>
            <person name="Inocencio N.M."/>
            <person name="Kuma K."/>
            <person name="Miyata T."/>
            <person name="Nagai Y."/>
        </authorList>
    </citation>
    <scope>NUCLEOTIDE SEQUENCE [GENOMIC RNA]</scope>
</reference>
<dbReference type="EC" id="3.2.1.18" evidence="3"/>
<dbReference type="EMBL" id="M24709">
    <property type="protein sequence ID" value="AAA46659.1"/>
    <property type="molecule type" value="Genomic_RNA"/>
</dbReference>
<dbReference type="PIR" id="E46328">
    <property type="entry name" value="E46328"/>
</dbReference>
<dbReference type="SMR" id="P35743"/>
<dbReference type="CAZy" id="GH83">
    <property type="family name" value="Glycoside Hydrolase Family 83"/>
</dbReference>
<dbReference type="GlyCosmos" id="P35743">
    <property type="glycosylation" value="5 sites, No reported glycans"/>
</dbReference>
<dbReference type="GO" id="GO:0020002">
    <property type="term" value="C:host cell plasma membrane"/>
    <property type="evidence" value="ECO:0007669"/>
    <property type="project" value="UniProtKB-SubCell"/>
</dbReference>
<dbReference type="GO" id="GO:0016020">
    <property type="term" value="C:membrane"/>
    <property type="evidence" value="ECO:0007669"/>
    <property type="project" value="UniProtKB-KW"/>
</dbReference>
<dbReference type="GO" id="GO:0019031">
    <property type="term" value="C:viral envelope"/>
    <property type="evidence" value="ECO:0007669"/>
    <property type="project" value="UniProtKB-KW"/>
</dbReference>
<dbReference type="GO" id="GO:0055036">
    <property type="term" value="C:virion membrane"/>
    <property type="evidence" value="ECO:0007669"/>
    <property type="project" value="UniProtKB-SubCell"/>
</dbReference>
<dbReference type="GO" id="GO:0004308">
    <property type="term" value="F:exo-alpha-sialidase activity"/>
    <property type="evidence" value="ECO:0007669"/>
    <property type="project" value="UniProtKB-EC"/>
</dbReference>
<dbReference type="GO" id="GO:0046789">
    <property type="term" value="F:host cell surface receptor binding"/>
    <property type="evidence" value="ECO:0007669"/>
    <property type="project" value="InterPro"/>
</dbReference>
<dbReference type="GO" id="GO:0046718">
    <property type="term" value="P:symbiont entry into host cell"/>
    <property type="evidence" value="ECO:0007669"/>
    <property type="project" value="UniProtKB-KW"/>
</dbReference>
<dbReference type="GO" id="GO:0019062">
    <property type="term" value="P:virion attachment to host cell"/>
    <property type="evidence" value="ECO:0007669"/>
    <property type="project" value="UniProtKB-KW"/>
</dbReference>
<dbReference type="CDD" id="cd15469">
    <property type="entry name" value="HN"/>
    <property type="match status" value="1"/>
</dbReference>
<dbReference type="FunFam" id="2.120.10.10:FF:000004">
    <property type="entry name" value="Hemagglutinin-neuraminidase"/>
    <property type="match status" value="1"/>
</dbReference>
<dbReference type="Gene3D" id="2.120.10.10">
    <property type="match status" value="1"/>
</dbReference>
<dbReference type="InterPro" id="IPR016285">
    <property type="entry name" value="Hemagglutn-neuramid"/>
</dbReference>
<dbReference type="InterPro" id="IPR000665">
    <property type="entry name" value="Hemagglutn/HN"/>
</dbReference>
<dbReference type="InterPro" id="IPR036278">
    <property type="entry name" value="Sialidase_sf"/>
</dbReference>
<dbReference type="Pfam" id="PF00423">
    <property type="entry name" value="HN"/>
    <property type="match status" value="1"/>
</dbReference>
<dbReference type="PIRSF" id="PIRSF001072">
    <property type="entry name" value="Hemagglut-neuramid_paramyxoV"/>
    <property type="match status" value="1"/>
</dbReference>
<dbReference type="SUPFAM" id="SSF50939">
    <property type="entry name" value="Sialidases"/>
    <property type="match status" value="1"/>
</dbReference>
<name>HN_NDVL</name>
<organismHost>
    <name type="scientific">Gallus gallus</name>
    <name type="common">Chicken</name>
    <dbReference type="NCBI Taxonomy" id="9031"/>
</organismHost>
<proteinExistence type="inferred from homology"/>
<accession>P35743</accession>
<feature type="chain" id="PRO_0000142615" description="Hemagglutinin-neuraminidase">
    <location>
        <begin position="1"/>
        <end position="577"/>
    </location>
</feature>
<feature type="topological domain" description="Intravirion" evidence="4">
    <location>
        <begin position="1"/>
        <end position="26"/>
    </location>
</feature>
<feature type="transmembrane region" description="Helical" evidence="4">
    <location>
        <begin position="27"/>
        <end position="47"/>
    </location>
</feature>
<feature type="topological domain" description="Virion surface" evidence="4">
    <location>
        <begin position="48"/>
        <end position="577"/>
    </location>
</feature>
<feature type="region of interest" description="Important for interaction with fusion/F protein" evidence="2">
    <location>
        <begin position="124"/>
        <end position="152"/>
    </location>
</feature>
<feature type="region of interest" description="Involved in neuraminidase activity" evidence="2">
    <location>
        <begin position="234"/>
        <end position="239"/>
    </location>
</feature>
<feature type="glycosylation site" description="N-linked (GlcNAc...) asparagine; by host" evidence="4">
    <location>
        <position position="119"/>
    </location>
</feature>
<feature type="glycosylation site" description="N-linked (GlcNAc...) asparagine; by host" evidence="2">
    <location>
        <position position="341"/>
    </location>
</feature>
<feature type="glycosylation site" description="N-linked (GlcNAc...) asparagine; by host" evidence="2">
    <location>
        <position position="433"/>
    </location>
</feature>
<feature type="glycosylation site" description="N-linked (GlcNAc...) asparagine; by host" evidence="2">
    <location>
        <position position="481"/>
    </location>
</feature>
<feature type="glycosylation site" description="N-linked (GlcNAc...) asparagine; by host" evidence="4">
    <location>
        <position position="538"/>
    </location>
</feature>
<feature type="disulfide bond" evidence="3">
    <location>
        <begin position="172"/>
        <end position="196"/>
    </location>
</feature>
<feature type="disulfide bond" evidence="3">
    <location>
        <begin position="186"/>
        <end position="247"/>
    </location>
</feature>
<feature type="disulfide bond" evidence="3">
    <location>
        <begin position="238"/>
        <end position="251"/>
    </location>
</feature>
<feature type="disulfide bond" evidence="3">
    <location>
        <begin position="344"/>
        <end position="461"/>
    </location>
</feature>
<feature type="disulfide bond" evidence="3">
    <location>
        <begin position="455"/>
        <end position="465"/>
    </location>
</feature>
<feature type="disulfide bond" evidence="3">
    <location>
        <begin position="531"/>
        <end position="542"/>
    </location>
</feature>
<feature type="sequence conflict" description="In Ref. 1; AAA46659." evidence="5" ref="1">
    <original>S</original>
    <variation>G</variation>
    <location>
        <position position="310"/>
    </location>
</feature>
<feature type="sequence conflict" description="In Ref. 1; AAA46659." evidence="5" ref="1">
    <original>A</original>
    <variation>T</variation>
    <location>
        <position position="502"/>
    </location>
</feature>
<comment type="function">
    <text evidence="2">Mediates the viral entry into the host cell together with fusion/F protein. Attaches the virus to sialic acid-containing cell receptors and thereby initiates infection. Binding of HN protein to the receptor induces a conformational change that allows the F protein to trigger virion/cell membranes fusion.</text>
</comment>
<comment type="function">
    <text evidence="2">Neuraminidase activity ensures the efficient spread of the virus by dissociating the mature virions from the neuraminic acid containing glycoproteins.</text>
</comment>
<comment type="catalytic activity">
    <reaction evidence="2">
        <text>Hydrolysis of alpha-(2-&gt;3)-, alpha-(2-&gt;6)-, alpha-(2-&gt;8)- glycosidic linkages of terminal sialic acid residues in oligosaccharides, glycoproteins, glycolipids, colominic acid and synthetic substrates.</text>
        <dbReference type="EC" id="3.2.1.18"/>
    </reaction>
</comment>
<comment type="subunit">
    <text evidence="1 2 3">Homotetramer; composed of disulfide-linked homodimers (By similarity). Interacts with F protein trimer (By similarity). Interacts with host CG-1B; this interaction inhibits viral adsorption and replication rather than internalization (By similarity).</text>
</comment>
<comment type="subcellular location">
    <subcellularLocation>
        <location evidence="2">Virion membrane</location>
        <topology evidence="2">Single-pass type II membrane protein</topology>
    </subcellularLocation>
    <subcellularLocation>
        <location evidence="2">Host cell membrane</location>
        <topology evidence="2">Single-pass type II membrane protein</topology>
    </subcellularLocation>
</comment>
<comment type="domain">
    <text evidence="3">The C-terminus (head domain) is involved in binding the cellular receptor.</text>
</comment>
<comment type="similarity">
    <text evidence="5">Belongs to the paramyxoviruses hemagglutinin-neuraminidase family.</text>
</comment>
<sequence>MDRAVSQVALENDEREAKNTWRLIFRIAILFLTVVTLAISVASLLYSMGASTPSDLVGIPTRISRAEEKITSTLGSNQDVVDRIYKQVALESPLALLKTETTIMNAITSLSYQINGAANNSGWGAPIHDPDYIGGIGKELIVDDASDVTSFYPSAFQEHLNFIPAPTTGSGCTRIPSFDMSATHYCYTHNVILSGCRDHSHSYQYLALGVLRTSATGRVFFSTLRSINLDDTQNRKSCSVSATPLGCDMLCSKVTETEEEDYNSAVPTRMAHGRLGFDGQYHEKDLDVTTLFGDWVANYPGVGGGSFIDSRVWFSVYGGLKPNSPSDTVQEGKYVIYKRYNDTCPDEQDYQIRMAKSSYKPGRFGGKRIQQAILSIKVSTSLGEDPVLTVPPNTVTLMGAEGRILTVGTSHFLYQRGSSYFSPALLYPMTVSNKTATLHSPYTFNAFTRPGSIPCQASARCPNPCVTGVYTDPYPLIFYRNHTLRGVFGTMLDGVQARLNPASAVFDSTSRSRITRVSSSSTKAAYTTSTCFKVVKTNKTYCLSIAEISNTLFGEFRIVPLLVEILKDDGVREARSG</sequence>
<evidence type="ECO:0000250" key="1">
    <source>
        <dbReference type="UniProtKB" id="P04853"/>
    </source>
</evidence>
<evidence type="ECO:0000250" key="2">
    <source>
        <dbReference type="UniProtKB" id="Q91UL0"/>
    </source>
</evidence>
<evidence type="ECO:0000250" key="3">
    <source>
        <dbReference type="UniProtKB" id="Q9WAF5"/>
    </source>
</evidence>
<evidence type="ECO:0000255" key="4"/>
<evidence type="ECO:0000305" key="5"/>